<organism>
    <name type="scientific">Hahella chejuensis (strain KCTC 2396)</name>
    <dbReference type="NCBI Taxonomy" id="349521"/>
    <lineage>
        <taxon>Bacteria</taxon>
        <taxon>Pseudomonadati</taxon>
        <taxon>Pseudomonadota</taxon>
        <taxon>Gammaproteobacteria</taxon>
        <taxon>Oceanospirillales</taxon>
        <taxon>Hahellaceae</taxon>
        <taxon>Hahella</taxon>
    </lineage>
</organism>
<proteinExistence type="inferred from homology"/>
<name>RPIA_HAHCH</name>
<accession>Q2SN31</accession>
<reference key="1">
    <citation type="journal article" date="2005" name="Nucleic Acids Res.">
        <title>Genomic blueprint of Hahella chejuensis, a marine microbe producing an algicidal agent.</title>
        <authorList>
            <person name="Jeong H."/>
            <person name="Yim J.H."/>
            <person name="Lee C."/>
            <person name="Choi S.-H."/>
            <person name="Park Y.K."/>
            <person name="Yoon S.H."/>
            <person name="Hur C.-G."/>
            <person name="Kang H.-Y."/>
            <person name="Kim D."/>
            <person name="Lee H.H."/>
            <person name="Park K.H."/>
            <person name="Park S.-H."/>
            <person name="Park H.-S."/>
            <person name="Lee H.K."/>
            <person name="Oh T.K."/>
            <person name="Kim J.F."/>
        </authorList>
    </citation>
    <scope>NUCLEOTIDE SEQUENCE [LARGE SCALE GENOMIC DNA]</scope>
    <source>
        <strain>KCTC 2396</strain>
    </source>
</reference>
<gene>
    <name evidence="1" type="primary">rpiA</name>
    <name type="ordered locus">HCH_01062</name>
</gene>
<sequence>MNQDELKQAVAKAALDYIKPHLQSDTILGIGTGSTANYFIDALAEVRTQFEGAVASSEASAERLKKHNIPVYELNSVSGLEFYIDGADETNPRLELIKGGGAALTREKIVAANAKTFICIADESKWVDVLGDFPLPIEVIPMARSYVARELVKLGGDPVYREGCVTDNGNIILDVFNLRILEPVKLEQQINQITGVVTNGLFAMRPADVLLLGSQEGVKTIKVDA</sequence>
<comment type="function">
    <text evidence="1">Catalyzes the reversible conversion of ribose-5-phosphate to ribulose 5-phosphate.</text>
</comment>
<comment type="catalytic activity">
    <reaction evidence="1">
        <text>aldehydo-D-ribose 5-phosphate = D-ribulose 5-phosphate</text>
        <dbReference type="Rhea" id="RHEA:14657"/>
        <dbReference type="ChEBI" id="CHEBI:58121"/>
        <dbReference type="ChEBI" id="CHEBI:58273"/>
        <dbReference type="EC" id="5.3.1.6"/>
    </reaction>
</comment>
<comment type="pathway">
    <text evidence="1">Carbohydrate degradation; pentose phosphate pathway; D-ribose 5-phosphate from D-ribulose 5-phosphate (non-oxidative stage): step 1/1.</text>
</comment>
<comment type="subunit">
    <text evidence="1">Homodimer.</text>
</comment>
<comment type="similarity">
    <text evidence="1">Belongs to the ribose 5-phosphate isomerase family.</text>
</comment>
<feature type="chain" id="PRO_1000016931" description="Ribose-5-phosphate isomerase A">
    <location>
        <begin position="1"/>
        <end position="225"/>
    </location>
</feature>
<feature type="active site" description="Proton acceptor" evidence="1">
    <location>
        <position position="107"/>
    </location>
</feature>
<feature type="binding site" evidence="1">
    <location>
        <begin position="32"/>
        <end position="35"/>
    </location>
    <ligand>
        <name>substrate</name>
    </ligand>
</feature>
<feature type="binding site" evidence="1">
    <location>
        <begin position="85"/>
        <end position="88"/>
    </location>
    <ligand>
        <name>substrate</name>
    </ligand>
</feature>
<feature type="binding site" evidence="1">
    <location>
        <begin position="98"/>
        <end position="101"/>
    </location>
    <ligand>
        <name>substrate</name>
    </ligand>
</feature>
<feature type="binding site" evidence="1">
    <location>
        <position position="125"/>
    </location>
    <ligand>
        <name>substrate</name>
    </ligand>
</feature>
<protein>
    <recommendedName>
        <fullName evidence="1">Ribose-5-phosphate isomerase A</fullName>
        <ecNumber evidence="1">5.3.1.6</ecNumber>
    </recommendedName>
    <alternativeName>
        <fullName evidence="1">Phosphoriboisomerase A</fullName>
        <shortName evidence="1">PRI</shortName>
    </alternativeName>
</protein>
<keyword id="KW-0413">Isomerase</keyword>
<keyword id="KW-1185">Reference proteome</keyword>
<evidence type="ECO:0000255" key="1">
    <source>
        <dbReference type="HAMAP-Rule" id="MF_00170"/>
    </source>
</evidence>
<dbReference type="EC" id="5.3.1.6" evidence="1"/>
<dbReference type="EMBL" id="CP000155">
    <property type="protein sequence ID" value="ABC27943.1"/>
    <property type="molecule type" value="Genomic_DNA"/>
</dbReference>
<dbReference type="RefSeq" id="WP_011395018.1">
    <property type="nucleotide sequence ID" value="NC_007645.1"/>
</dbReference>
<dbReference type="SMR" id="Q2SN31"/>
<dbReference type="STRING" id="349521.HCH_01062"/>
<dbReference type="KEGG" id="hch:HCH_01062"/>
<dbReference type="eggNOG" id="COG0120">
    <property type="taxonomic scope" value="Bacteria"/>
</dbReference>
<dbReference type="HOGENOM" id="CLU_056590_1_1_6"/>
<dbReference type="OrthoDB" id="5870696at2"/>
<dbReference type="UniPathway" id="UPA00115">
    <property type="reaction ID" value="UER00412"/>
</dbReference>
<dbReference type="Proteomes" id="UP000000238">
    <property type="component" value="Chromosome"/>
</dbReference>
<dbReference type="GO" id="GO:0005829">
    <property type="term" value="C:cytosol"/>
    <property type="evidence" value="ECO:0007669"/>
    <property type="project" value="TreeGrafter"/>
</dbReference>
<dbReference type="GO" id="GO:0004751">
    <property type="term" value="F:ribose-5-phosphate isomerase activity"/>
    <property type="evidence" value="ECO:0007669"/>
    <property type="project" value="UniProtKB-UniRule"/>
</dbReference>
<dbReference type="GO" id="GO:0006014">
    <property type="term" value="P:D-ribose metabolic process"/>
    <property type="evidence" value="ECO:0007669"/>
    <property type="project" value="TreeGrafter"/>
</dbReference>
<dbReference type="GO" id="GO:0009052">
    <property type="term" value="P:pentose-phosphate shunt, non-oxidative branch"/>
    <property type="evidence" value="ECO:0007669"/>
    <property type="project" value="UniProtKB-UniRule"/>
</dbReference>
<dbReference type="CDD" id="cd01398">
    <property type="entry name" value="RPI_A"/>
    <property type="match status" value="1"/>
</dbReference>
<dbReference type="FunFam" id="3.30.70.260:FF:000004">
    <property type="entry name" value="Ribose-5-phosphate isomerase A"/>
    <property type="match status" value="1"/>
</dbReference>
<dbReference type="FunFam" id="3.40.50.1360:FF:000001">
    <property type="entry name" value="Ribose-5-phosphate isomerase A"/>
    <property type="match status" value="1"/>
</dbReference>
<dbReference type="Gene3D" id="3.30.70.260">
    <property type="match status" value="1"/>
</dbReference>
<dbReference type="Gene3D" id="3.40.50.1360">
    <property type="match status" value="1"/>
</dbReference>
<dbReference type="HAMAP" id="MF_00170">
    <property type="entry name" value="Rib_5P_isom_A"/>
    <property type="match status" value="1"/>
</dbReference>
<dbReference type="InterPro" id="IPR037171">
    <property type="entry name" value="NagB/RpiA_transferase-like"/>
</dbReference>
<dbReference type="InterPro" id="IPR020672">
    <property type="entry name" value="Ribose5P_isomerase_typA_subgr"/>
</dbReference>
<dbReference type="InterPro" id="IPR004788">
    <property type="entry name" value="Ribose5P_isomerase_type_A"/>
</dbReference>
<dbReference type="NCBIfam" id="NF001924">
    <property type="entry name" value="PRK00702.1"/>
    <property type="match status" value="1"/>
</dbReference>
<dbReference type="NCBIfam" id="TIGR00021">
    <property type="entry name" value="rpiA"/>
    <property type="match status" value="1"/>
</dbReference>
<dbReference type="PANTHER" id="PTHR11934">
    <property type="entry name" value="RIBOSE-5-PHOSPHATE ISOMERASE"/>
    <property type="match status" value="1"/>
</dbReference>
<dbReference type="PANTHER" id="PTHR11934:SF0">
    <property type="entry name" value="RIBOSE-5-PHOSPHATE ISOMERASE"/>
    <property type="match status" value="1"/>
</dbReference>
<dbReference type="Pfam" id="PF06026">
    <property type="entry name" value="Rib_5-P_isom_A"/>
    <property type="match status" value="1"/>
</dbReference>
<dbReference type="SUPFAM" id="SSF75445">
    <property type="entry name" value="D-ribose-5-phosphate isomerase (RpiA), lid domain"/>
    <property type="match status" value="1"/>
</dbReference>
<dbReference type="SUPFAM" id="SSF100950">
    <property type="entry name" value="NagB/RpiA/CoA transferase-like"/>
    <property type="match status" value="1"/>
</dbReference>